<gene>
    <name type="primary">IFNG</name>
</gene>
<keyword id="KW-0051">Antiviral defense</keyword>
<keyword id="KW-0202">Cytokine</keyword>
<keyword id="KW-0325">Glycoprotein</keyword>
<keyword id="KW-0341">Growth regulation</keyword>
<keyword id="KW-1185">Reference proteome</keyword>
<keyword id="KW-0964">Secreted</keyword>
<keyword id="KW-0732">Signal</keyword>
<proteinExistence type="inferred from homology"/>
<dbReference type="EMBL" id="AJ000725">
    <property type="protein sequence ID" value="CAA04260.1"/>
    <property type="molecule type" value="Genomic_DNA"/>
</dbReference>
<dbReference type="SMR" id="O57603"/>
<dbReference type="FunCoup" id="O57603">
    <property type="interactions" value="34"/>
</dbReference>
<dbReference type="GlyCosmos" id="O57603">
    <property type="glycosylation" value="2 sites, No reported glycans"/>
</dbReference>
<dbReference type="InParanoid" id="O57603"/>
<dbReference type="OrthoDB" id="9937106at2759"/>
<dbReference type="Proteomes" id="UP000001645">
    <property type="component" value="Unplaced"/>
</dbReference>
<dbReference type="GO" id="GO:0005615">
    <property type="term" value="C:extracellular space"/>
    <property type="evidence" value="ECO:0000250"/>
    <property type="project" value="AgBase"/>
</dbReference>
<dbReference type="GO" id="GO:0005125">
    <property type="term" value="F:cytokine activity"/>
    <property type="evidence" value="ECO:0007669"/>
    <property type="project" value="UniProtKB-KW"/>
</dbReference>
<dbReference type="GO" id="GO:0005133">
    <property type="term" value="F:type II interferon receptor binding"/>
    <property type="evidence" value="ECO:0007669"/>
    <property type="project" value="InterPro"/>
</dbReference>
<dbReference type="GO" id="GO:0002250">
    <property type="term" value="P:adaptive immune response"/>
    <property type="evidence" value="ECO:0007669"/>
    <property type="project" value="TreeGrafter"/>
</dbReference>
<dbReference type="GO" id="GO:0051607">
    <property type="term" value="P:defense response to virus"/>
    <property type="evidence" value="ECO:0007669"/>
    <property type="project" value="UniProtKB-KW"/>
</dbReference>
<dbReference type="GO" id="GO:0006959">
    <property type="term" value="P:humoral immune response"/>
    <property type="evidence" value="ECO:0007669"/>
    <property type="project" value="TreeGrafter"/>
</dbReference>
<dbReference type="GO" id="GO:0042116">
    <property type="term" value="P:macrophage activation"/>
    <property type="evidence" value="ECO:0000250"/>
    <property type="project" value="AgBase"/>
</dbReference>
<dbReference type="GO" id="GO:0070673">
    <property type="term" value="P:response to interleukin-18"/>
    <property type="evidence" value="ECO:0000250"/>
    <property type="project" value="AgBase"/>
</dbReference>
<dbReference type="FunFam" id="1.20.1250.10:FF:000007">
    <property type="entry name" value="Interferon gamma"/>
    <property type="match status" value="1"/>
</dbReference>
<dbReference type="Gene3D" id="1.20.1250.10">
    <property type="match status" value="1"/>
</dbReference>
<dbReference type="InterPro" id="IPR009079">
    <property type="entry name" value="4_helix_cytokine-like_core"/>
</dbReference>
<dbReference type="InterPro" id="IPR002069">
    <property type="entry name" value="Interferon_gamma"/>
</dbReference>
<dbReference type="PANTHER" id="PTHR11419">
    <property type="entry name" value="INTERFERON GAMMA"/>
    <property type="match status" value="1"/>
</dbReference>
<dbReference type="PANTHER" id="PTHR11419:SF0">
    <property type="entry name" value="INTERFERON GAMMA"/>
    <property type="match status" value="1"/>
</dbReference>
<dbReference type="Pfam" id="PF00714">
    <property type="entry name" value="IFN-gamma"/>
    <property type="match status" value="1"/>
</dbReference>
<dbReference type="PIRSF" id="PIRSF001936">
    <property type="entry name" value="IFN-gamma"/>
    <property type="match status" value="1"/>
</dbReference>
<dbReference type="SUPFAM" id="SSF47266">
    <property type="entry name" value="4-helical cytokines"/>
    <property type="match status" value="1"/>
</dbReference>
<comment type="function">
    <text evidence="1">Produced by lymphocytes activated by specific antigens or mitogens. IFN-gamma, in addition to having antiviral activity, has important immunoregulatory functions. It is a potent activator of macrophages, it has antiproliferative effects on transformed cells and it can potentiate the antiviral and antitumor effects of the type I interferons (By similarity).</text>
</comment>
<comment type="subunit">
    <text evidence="1">Homodimer.</text>
</comment>
<comment type="subcellular location">
    <subcellularLocation>
        <location evidence="1">Secreted</location>
    </subcellularLocation>
</comment>
<comment type="similarity">
    <text evidence="3">Belongs to the type II (or gamma) interferon family.</text>
</comment>
<name>IFNG_MELGA</name>
<organism>
    <name type="scientific">Meleagris gallopavo</name>
    <name type="common">Wild turkey</name>
    <dbReference type="NCBI Taxonomy" id="9103"/>
    <lineage>
        <taxon>Eukaryota</taxon>
        <taxon>Metazoa</taxon>
        <taxon>Chordata</taxon>
        <taxon>Craniata</taxon>
        <taxon>Vertebrata</taxon>
        <taxon>Euteleostomi</taxon>
        <taxon>Archelosauria</taxon>
        <taxon>Archosauria</taxon>
        <taxon>Dinosauria</taxon>
        <taxon>Saurischia</taxon>
        <taxon>Theropoda</taxon>
        <taxon>Coelurosauria</taxon>
        <taxon>Aves</taxon>
        <taxon>Neognathae</taxon>
        <taxon>Galloanserae</taxon>
        <taxon>Galliformes</taxon>
        <taxon>Phasianidae</taxon>
        <taxon>Meleagridinae</taxon>
        <taxon>Meleagris</taxon>
    </lineage>
</organism>
<protein>
    <recommendedName>
        <fullName>Interferon gamma</fullName>
        <shortName>IFN-gamma</shortName>
    </recommendedName>
</protein>
<feature type="signal peptide" evidence="2">
    <location>
        <begin position="1"/>
        <end position="19"/>
    </location>
</feature>
<feature type="chain" id="PRO_0000016465" description="Interferon gamma">
    <location>
        <begin position="20"/>
        <end position="164"/>
    </location>
</feature>
<feature type="glycosylation site" description="N-linked (GlcNAc...) asparagine" evidence="2">
    <location>
        <position position="42"/>
    </location>
</feature>
<feature type="glycosylation site" description="N-linked (GlcNAc...) asparagine" evidence="2">
    <location>
        <position position="61"/>
    </location>
</feature>
<accession>O57603</accession>
<sequence length="164" mass="18943">MTCQTYNLFVLSVIMIYYGHTASSLNLVQLQDDIDKLKADFNSSHSDVADGGPIIVEKLKNWTERNEKRIILSQIVSMYLEMLENTDKSKPHIKHISEELYTLKNNLPDGVKKVKDIMDLAKLQMNDLRIQRKAANELFSILQKLVDPPSSKRKRSHPQRRCNC</sequence>
<evidence type="ECO:0000250" key="1"/>
<evidence type="ECO:0000255" key="2"/>
<evidence type="ECO:0000305" key="3"/>
<reference key="1">
    <citation type="submission" date="1998-01" db="EMBL/GenBank/DDBJ databases">
        <title>Avian interferon-gamma: cloning, sequencing and comparison of interferon-gamma genes from several different avian species.</title>
        <authorList>
            <person name="Kaiser P."/>
            <person name="Sonnemans D."/>
            <person name="Smith L.M."/>
        </authorList>
    </citation>
    <scope>NUCLEOTIDE SEQUENCE [GENOMIC DNA]</scope>
    <source>
        <tissue>Embryo</tissue>
    </source>
</reference>